<evidence type="ECO:0000250" key="1"/>
<evidence type="ECO:0000255" key="2"/>
<evidence type="ECO:0000255" key="3">
    <source>
        <dbReference type="PROSITE-ProRule" id="PRU00159"/>
    </source>
</evidence>
<evidence type="ECO:0000255" key="4">
    <source>
        <dbReference type="PROSITE-ProRule" id="PRU00184"/>
    </source>
</evidence>
<evidence type="ECO:0000255" key="5">
    <source>
        <dbReference type="PROSITE-ProRule" id="PRU00316"/>
    </source>
</evidence>
<evidence type="ECO:0000255" key="6">
    <source>
        <dbReference type="PROSITE-ProRule" id="PRU00883"/>
    </source>
</evidence>
<evidence type="ECO:0000255" key="7">
    <source>
        <dbReference type="PROSITE-ProRule" id="PRU10028"/>
    </source>
</evidence>
<dbReference type="EC" id="2.7.10.1"/>
<dbReference type="EMBL" id="Z19110">
    <property type="protein sequence ID" value="CAA79526.1"/>
    <property type="molecule type" value="mRNA"/>
</dbReference>
<dbReference type="PIR" id="I50612">
    <property type="entry name" value="I50612"/>
</dbReference>
<dbReference type="FunCoup" id="Q07494">
    <property type="interactions" value="512"/>
</dbReference>
<dbReference type="STRING" id="9031.ENSGALP00000010654"/>
<dbReference type="GlyCosmos" id="Q07494">
    <property type="glycosylation" value="3 sites, No reported glycans"/>
</dbReference>
<dbReference type="GlyGen" id="Q07494">
    <property type="glycosylation" value="3 sites"/>
</dbReference>
<dbReference type="iPTMnet" id="Q07494"/>
<dbReference type="PaxDb" id="9031-ENSGALP00000010654"/>
<dbReference type="VEuPathDB" id="HostDB:geneid_396177"/>
<dbReference type="eggNOG" id="KOG0196">
    <property type="taxonomic scope" value="Eukaryota"/>
</dbReference>
<dbReference type="InParanoid" id="Q07494"/>
<dbReference type="OrthoDB" id="4062651at2759"/>
<dbReference type="PhylomeDB" id="Q07494"/>
<dbReference type="Proteomes" id="UP000000539">
    <property type="component" value="Unassembled WGS sequence"/>
</dbReference>
<dbReference type="GO" id="GO:0030425">
    <property type="term" value="C:dendrite"/>
    <property type="evidence" value="ECO:0007669"/>
    <property type="project" value="UniProtKB-SubCell"/>
</dbReference>
<dbReference type="GO" id="GO:0031901">
    <property type="term" value="C:early endosome membrane"/>
    <property type="evidence" value="ECO:0000250"/>
    <property type="project" value="UniProtKB"/>
</dbReference>
<dbReference type="GO" id="GO:0005886">
    <property type="term" value="C:plasma membrane"/>
    <property type="evidence" value="ECO:0000250"/>
    <property type="project" value="UniProtKB"/>
</dbReference>
<dbReference type="GO" id="GO:0043235">
    <property type="term" value="C:receptor complex"/>
    <property type="evidence" value="ECO:0000318"/>
    <property type="project" value="GO_Central"/>
</dbReference>
<dbReference type="GO" id="GO:0005524">
    <property type="term" value="F:ATP binding"/>
    <property type="evidence" value="ECO:0007669"/>
    <property type="project" value="UniProtKB-KW"/>
</dbReference>
<dbReference type="GO" id="GO:0004714">
    <property type="term" value="F:transmembrane receptor protein tyrosine kinase activity"/>
    <property type="evidence" value="ECO:0000318"/>
    <property type="project" value="GO_Central"/>
</dbReference>
<dbReference type="GO" id="GO:0005005">
    <property type="term" value="F:transmembrane-ephrin receptor activity"/>
    <property type="evidence" value="ECO:0000250"/>
    <property type="project" value="UniProtKB"/>
</dbReference>
<dbReference type="GO" id="GO:0007411">
    <property type="term" value="P:axon guidance"/>
    <property type="evidence" value="ECO:0000250"/>
    <property type="project" value="UniProtKB"/>
</dbReference>
<dbReference type="GO" id="GO:0060326">
    <property type="term" value="P:cell chemotaxis"/>
    <property type="evidence" value="ECO:0000250"/>
    <property type="project" value="UniProtKB"/>
</dbReference>
<dbReference type="GO" id="GO:0007169">
    <property type="term" value="P:cell surface receptor protein tyrosine kinase signaling pathway"/>
    <property type="evidence" value="ECO:0000318"/>
    <property type="project" value="GO_Central"/>
</dbReference>
<dbReference type="GO" id="GO:0031589">
    <property type="term" value="P:cell-substrate adhesion"/>
    <property type="evidence" value="ECO:0000250"/>
    <property type="project" value="UniProtKB"/>
</dbReference>
<dbReference type="GO" id="GO:0060996">
    <property type="term" value="P:dendritic spine development"/>
    <property type="evidence" value="ECO:0000250"/>
    <property type="project" value="UniProtKB"/>
</dbReference>
<dbReference type="GO" id="GO:0060997">
    <property type="term" value="P:dendritic spine morphogenesis"/>
    <property type="evidence" value="ECO:0000250"/>
    <property type="project" value="UniProtKB"/>
</dbReference>
<dbReference type="GO" id="GO:0048013">
    <property type="term" value="P:ephrin receptor signaling pathway"/>
    <property type="evidence" value="ECO:0000250"/>
    <property type="project" value="UniProtKB"/>
</dbReference>
<dbReference type="GO" id="GO:0030010">
    <property type="term" value="P:establishment of cell polarity"/>
    <property type="evidence" value="ECO:0000250"/>
    <property type="project" value="UniProtKB"/>
</dbReference>
<dbReference type="GO" id="GO:0051965">
    <property type="term" value="P:positive regulation of synapse assembly"/>
    <property type="evidence" value="ECO:0000250"/>
    <property type="project" value="UniProtKB"/>
</dbReference>
<dbReference type="GO" id="GO:0046777">
    <property type="term" value="P:protein autophosphorylation"/>
    <property type="evidence" value="ECO:0000250"/>
    <property type="project" value="UniProtKB"/>
</dbReference>
<dbReference type="GO" id="GO:0070372">
    <property type="term" value="P:regulation of ERK1 and ERK2 cascade"/>
    <property type="evidence" value="ECO:0000250"/>
    <property type="project" value="UniProtKB"/>
</dbReference>
<dbReference type="GO" id="GO:0046328">
    <property type="term" value="P:regulation of JNK cascade"/>
    <property type="evidence" value="ECO:0000250"/>
    <property type="project" value="UniProtKB"/>
</dbReference>
<dbReference type="CDD" id="cd00063">
    <property type="entry name" value="FN3"/>
    <property type="match status" value="2"/>
</dbReference>
<dbReference type="CDD" id="cd05065">
    <property type="entry name" value="PTKc_EphR_B"/>
    <property type="match status" value="1"/>
</dbReference>
<dbReference type="CDD" id="cd09551">
    <property type="entry name" value="SAM_EPH-B1"/>
    <property type="match status" value="1"/>
</dbReference>
<dbReference type="FunFam" id="2.60.40.10:FF:000041">
    <property type="entry name" value="ephrin type-A receptor 3"/>
    <property type="match status" value="1"/>
</dbReference>
<dbReference type="FunFam" id="1.10.150.50:FF:000001">
    <property type="entry name" value="Ephrin type-A receptor 5"/>
    <property type="match status" value="1"/>
</dbReference>
<dbReference type="FunFam" id="2.10.50.10:FF:000001">
    <property type="entry name" value="Ephrin type-A receptor 5"/>
    <property type="match status" value="1"/>
</dbReference>
<dbReference type="FunFam" id="2.60.40.1770:FF:000001">
    <property type="entry name" value="Ephrin type-A receptor 5"/>
    <property type="match status" value="1"/>
</dbReference>
<dbReference type="FunFam" id="3.30.200.20:FF:000001">
    <property type="entry name" value="Ephrin type-A receptor 5"/>
    <property type="match status" value="1"/>
</dbReference>
<dbReference type="FunFam" id="1.10.510.10:FF:000015">
    <property type="entry name" value="Ephrin type-B receptor 2"/>
    <property type="match status" value="1"/>
</dbReference>
<dbReference type="FunFam" id="2.60.40.10:FF:000110">
    <property type="entry name" value="Ephrin type-B receptor 2"/>
    <property type="match status" value="1"/>
</dbReference>
<dbReference type="Gene3D" id="2.60.40.1770">
    <property type="entry name" value="ephrin a2 ectodomain"/>
    <property type="match status" value="1"/>
</dbReference>
<dbReference type="Gene3D" id="2.60.120.260">
    <property type="entry name" value="Galactose-binding domain-like"/>
    <property type="match status" value="1"/>
</dbReference>
<dbReference type="Gene3D" id="2.60.40.10">
    <property type="entry name" value="Immunoglobulins"/>
    <property type="match status" value="2"/>
</dbReference>
<dbReference type="Gene3D" id="3.30.200.20">
    <property type="entry name" value="Phosphorylase Kinase, domain 1"/>
    <property type="match status" value="1"/>
</dbReference>
<dbReference type="Gene3D" id="1.10.150.50">
    <property type="entry name" value="Transcription Factor, Ets-1"/>
    <property type="match status" value="1"/>
</dbReference>
<dbReference type="Gene3D" id="1.10.510.10">
    <property type="entry name" value="Transferase(Phosphotransferase) domain 1"/>
    <property type="match status" value="1"/>
</dbReference>
<dbReference type="Gene3D" id="2.10.50.10">
    <property type="entry name" value="Tumor Necrosis Factor Receptor, subunit A, domain 2"/>
    <property type="match status" value="1"/>
</dbReference>
<dbReference type="InterPro" id="IPR027936">
    <property type="entry name" value="Eph_TM"/>
</dbReference>
<dbReference type="InterPro" id="IPR042819">
    <property type="entry name" value="EphB1_SAM"/>
</dbReference>
<dbReference type="InterPro" id="IPR001090">
    <property type="entry name" value="Ephrin_rcpt_lig-bd_dom"/>
</dbReference>
<dbReference type="InterPro" id="IPR050449">
    <property type="entry name" value="Ephrin_rcpt_TKs"/>
</dbReference>
<dbReference type="InterPro" id="IPR003961">
    <property type="entry name" value="FN3_dom"/>
</dbReference>
<dbReference type="InterPro" id="IPR036116">
    <property type="entry name" value="FN3_sf"/>
</dbReference>
<dbReference type="InterPro" id="IPR008979">
    <property type="entry name" value="Galactose-bd-like_sf"/>
</dbReference>
<dbReference type="InterPro" id="IPR009030">
    <property type="entry name" value="Growth_fac_rcpt_cys_sf"/>
</dbReference>
<dbReference type="InterPro" id="IPR013783">
    <property type="entry name" value="Ig-like_fold"/>
</dbReference>
<dbReference type="InterPro" id="IPR011009">
    <property type="entry name" value="Kinase-like_dom_sf"/>
</dbReference>
<dbReference type="InterPro" id="IPR000719">
    <property type="entry name" value="Prot_kinase_dom"/>
</dbReference>
<dbReference type="InterPro" id="IPR017441">
    <property type="entry name" value="Protein_kinase_ATP_BS"/>
</dbReference>
<dbReference type="InterPro" id="IPR001660">
    <property type="entry name" value="SAM"/>
</dbReference>
<dbReference type="InterPro" id="IPR013761">
    <property type="entry name" value="SAM/pointed_sf"/>
</dbReference>
<dbReference type="InterPro" id="IPR001245">
    <property type="entry name" value="Ser-Thr/Tyr_kinase_cat_dom"/>
</dbReference>
<dbReference type="InterPro" id="IPR011641">
    <property type="entry name" value="Tyr-kin_ephrin_A/B_rcpt-like"/>
</dbReference>
<dbReference type="InterPro" id="IPR008266">
    <property type="entry name" value="Tyr_kinase_AS"/>
</dbReference>
<dbReference type="InterPro" id="IPR020635">
    <property type="entry name" value="Tyr_kinase_cat_dom"/>
</dbReference>
<dbReference type="InterPro" id="IPR016257">
    <property type="entry name" value="Tyr_kinase_ephrin_rcpt"/>
</dbReference>
<dbReference type="InterPro" id="IPR001426">
    <property type="entry name" value="Tyr_kinase_rcpt_V_CS"/>
</dbReference>
<dbReference type="PANTHER" id="PTHR46877">
    <property type="entry name" value="EPH RECEPTOR A5"/>
    <property type="match status" value="1"/>
</dbReference>
<dbReference type="PANTHER" id="PTHR46877:SF17">
    <property type="entry name" value="EPHRIN TYPE-B RECEPTOR 1"/>
    <property type="match status" value="1"/>
</dbReference>
<dbReference type="Pfam" id="PF14575">
    <property type="entry name" value="EphA2_TM"/>
    <property type="match status" value="1"/>
</dbReference>
<dbReference type="Pfam" id="PF01404">
    <property type="entry name" value="Ephrin_lbd"/>
    <property type="match status" value="1"/>
</dbReference>
<dbReference type="Pfam" id="PF07699">
    <property type="entry name" value="Ephrin_rec_like"/>
    <property type="match status" value="1"/>
</dbReference>
<dbReference type="Pfam" id="PF00041">
    <property type="entry name" value="fn3"/>
    <property type="match status" value="2"/>
</dbReference>
<dbReference type="Pfam" id="PF07714">
    <property type="entry name" value="PK_Tyr_Ser-Thr"/>
    <property type="match status" value="1"/>
</dbReference>
<dbReference type="Pfam" id="PF07647">
    <property type="entry name" value="SAM_2"/>
    <property type="match status" value="1"/>
</dbReference>
<dbReference type="PIRSF" id="PIRSF000666">
    <property type="entry name" value="TyrPK_ephrin_receptor"/>
    <property type="match status" value="1"/>
</dbReference>
<dbReference type="PRINTS" id="PR00014">
    <property type="entry name" value="FNTYPEIII"/>
</dbReference>
<dbReference type="PRINTS" id="PR00109">
    <property type="entry name" value="TYRKINASE"/>
</dbReference>
<dbReference type="SMART" id="SM00615">
    <property type="entry name" value="EPH_lbd"/>
    <property type="match status" value="1"/>
</dbReference>
<dbReference type="SMART" id="SM01411">
    <property type="entry name" value="Ephrin_rec_like"/>
    <property type="match status" value="1"/>
</dbReference>
<dbReference type="SMART" id="SM00060">
    <property type="entry name" value="FN3"/>
    <property type="match status" value="2"/>
</dbReference>
<dbReference type="SMART" id="SM00454">
    <property type="entry name" value="SAM"/>
    <property type="match status" value="1"/>
</dbReference>
<dbReference type="SMART" id="SM00219">
    <property type="entry name" value="TyrKc"/>
    <property type="match status" value="1"/>
</dbReference>
<dbReference type="SUPFAM" id="SSF49265">
    <property type="entry name" value="Fibronectin type III"/>
    <property type="match status" value="1"/>
</dbReference>
<dbReference type="SUPFAM" id="SSF49785">
    <property type="entry name" value="Galactose-binding domain-like"/>
    <property type="match status" value="1"/>
</dbReference>
<dbReference type="SUPFAM" id="SSF57184">
    <property type="entry name" value="Growth factor receptor domain"/>
    <property type="match status" value="1"/>
</dbReference>
<dbReference type="SUPFAM" id="SSF56112">
    <property type="entry name" value="Protein kinase-like (PK-like)"/>
    <property type="match status" value="1"/>
</dbReference>
<dbReference type="SUPFAM" id="SSF47769">
    <property type="entry name" value="SAM/Pointed domain"/>
    <property type="match status" value="1"/>
</dbReference>
<dbReference type="PROSITE" id="PS01186">
    <property type="entry name" value="EGF_2"/>
    <property type="match status" value="1"/>
</dbReference>
<dbReference type="PROSITE" id="PS51550">
    <property type="entry name" value="EPH_LBD"/>
    <property type="match status" value="1"/>
</dbReference>
<dbReference type="PROSITE" id="PS50853">
    <property type="entry name" value="FN3"/>
    <property type="match status" value="2"/>
</dbReference>
<dbReference type="PROSITE" id="PS00107">
    <property type="entry name" value="PROTEIN_KINASE_ATP"/>
    <property type="match status" value="1"/>
</dbReference>
<dbReference type="PROSITE" id="PS50011">
    <property type="entry name" value="PROTEIN_KINASE_DOM"/>
    <property type="match status" value="1"/>
</dbReference>
<dbReference type="PROSITE" id="PS00109">
    <property type="entry name" value="PROTEIN_KINASE_TYR"/>
    <property type="match status" value="1"/>
</dbReference>
<dbReference type="PROSITE" id="PS00791">
    <property type="entry name" value="RECEPTOR_TYR_KIN_V_2"/>
    <property type="match status" value="1"/>
</dbReference>
<dbReference type="PROSITE" id="PS50105">
    <property type="entry name" value="SAM_DOMAIN"/>
    <property type="match status" value="1"/>
</dbReference>
<organism>
    <name type="scientific">Gallus gallus</name>
    <name type="common">Chicken</name>
    <dbReference type="NCBI Taxonomy" id="9031"/>
    <lineage>
        <taxon>Eukaryota</taxon>
        <taxon>Metazoa</taxon>
        <taxon>Chordata</taxon>
        <taxon>Craniata</taxon>
        <taxon>Vertebrata</taxon>
        <taxon>Euteleostomi</taxon>
        <taxon>Archelosauria</taxon>
        <taxon>Archosauria</taxon>
        <taxon>Dinosauria</taxon>
        <taxon>Saurischia</taxon>
        <taxon>Theropoda</taxon>
        <taxon>Coelurosauria</taxon>
        <taxon>Aves</taxon>
        <taxon>Neognathae</taxon>
        <taxon>Galloanserae</taxon>
        <taxon>Galliformes</taxon>
        <taxon>Phasianidae</taxon>
        <taxon>Phasianinae</taxon>
        <taxon>Gallus</taxon>
    </lineage>
</organism>
<proteinExistence type="evidence at transcript level"/>
<sequence>ETLMDTRTATAELGWTANPPSGWEEVSGYDENLNTIRTYQVCNVFEPNQNNWLLTTFINRRGAHRIYTEMRFTVRDCSSLPNVPGSCKETFNLYYYETDSVIATKKSAFWTEAPYLKVDTIAADESFSQVDFGGRLMKGXXXXXXXXXXXXXXXXXXXXXXXXXXXXXXXXXFFKKCPSVVQNFAIFPETMTGAESTSLVTARGTCIPNAEEVDVPIKLYCNGDGEWMVPIGRCTCKAGYEPENNVACRACPAGTFKASQGAGLCARCPPNSRSSAEASPLCACRNGYFRADLDPPTAACTSVPSGPRNVISIVNETSIILEWNPPRETGGRDDVTYNIVCKKCRADRRACSRCDDNVEFVPRQLGLTETRVFISSLWAHTPYTFEIQAVNGVSNKSPFPPQHVSVNITTNQAAPSTVPIMHQVSATMRSITLSWPQPEQPNGIILDYELRYYEKLSRICTPDVSGTVGSRPAADHNEYNSSVARSQTNTARLEGLRPGMVYVVQVRARTVAGYGKYSGKMCFQTLTDDDYKSELREQLPLIAGSAAAGVVFIVSLVAISIVCSRKRAYSKEVVYSDKLQHYSTGRGSPGMKIYIDPFTYEDPNEAVREFAKEIDVSFVKIEEVIGAGEFGEVYKGRLKLPGKREIYVAIKTLKAGYSEKQRRDFLSEASIMGQFDHPNIIRLEGVVTKSRPVMIITEFMENGALDSFLRQNDGQFTVIQLVGMLRGIAAGMKYLAEMNYVHRDLAARNILVNSNLVCKVSDFGLSRYLQDDTSDPTYTSSLGGKIPVRWTAPEAIAYRKFTSASDVWSYGIVMWEVMSFGERPYWDMSNQDVINAIEQDYRLPPPMDCPAALHQLMLDCWQKDRNTRPRLAEIVNTLDKMIRNPASLKTVATITAVPSQPLLDRSIPDFTAFTSVEDWLSAVKMSQYRDNFLSAGFTSLQLVAQMTSEDLLRIGVTLAGHQKKILNSIQSMRVQMSQSPTSMA</sequence>
<protein>
    <recommendedName>
        <fullName>Ephrin type-B receptor 1</fullName>
        <ecNumber>2.7.10.1</ecNumber>
    </recommendedName>
    <alternativeName>
        <fullName>EPH-like kinase 6</fullName>
        <shortName>EK6</shortName>
        <shortName>cEK6</shortName>
    </alternativeName>
    <alternativeName>
        <fullName>Tyrosine-protein kinase receptor EPH-2</fullName>
    </alternativeName>
</protein>
<accession>Q07494</accession>
<keyword id="KW-0067">ATP-binding</keyword>
<keyword id="KW-0130">Cell adhesion</keyword>
<keyword id="KW-1003">Cell membrane</keyword>
<keyword id="KW-0966">Cell projection</keyword>
<keyword id="KW-0967">Endosome</keyword>
<keyword id="KW-0325">Glycoprotein</keyword>
<keyword id="KW-0418">Kinase</keyword>
<keyword id="KW-0472">Membrane</keyword>
<keyword id="KW-0524">Neurogenesis</keyword>
<keyword id="KW-0547">Nucleotide-binding</keyword>
<keyword id="KW-0597">Phosphoprotein</keyword>
<keyword id="KW-0675">Receptor</keyword>
<keyword id="KW-1185">Reference proteome</keyword>
<keyword id="KW-0677">Repeat</keyword>
<keyword id="KW-0808">Transferase</keyword>
<keyword id="KW-0812">Transmembrane</keyword>
<keyword id="KW-1133">Transmembrane helix</keyword>
<keyword id="KW-0829">Tyrosine-protein kinase</keyword>
<feature type="chain" id="PRO_0000160274" description="Ephrin type-B receptor 1">
    <location>
        <begin position="1" status="less than"/>
        <end position="984"/>
    </location>
</feature>
<feature type="topological domain" description="Extracellular" evidence="2">
    <location>
        <begin position="1" status="less than"/>
        <end position="541"/>
    </location>
</feature>
<feature type="transmembrane region" description="Helical" evidence="2">
    <location>
        <begin position="542"/>
        <end position="562"/>
    </location>
</feature>
<feature type="topological domain" description="Cytoplasmic" evidence="2">
    <location>
        <begin position="563"/>
        <end position="984"/>
    </location>
</feature>
<feature type="domain" description="Eph LBD" evidence="6">
    <location>
        <begin position="1"/>
        <end position="182"/>
    </location>
</feature>
<feature type="domain" description="Fibronectin type-III 1" evidence="5">
    <location>
        <begin position="303"/>
        <end position="413"/>
    </location>
</feature>
<feature type="domain" description="Fibronectin type-III 2" evidence="5">
    <location>
        <begin position="414"/>
        <end position="528"/>
    </location>
</feature>
<feature type="domain" description="Protein kinase" evidence="3">
    <location>
        <begin position="619"/>
        <end position="882"/>
    </location>
</feature>
<feature type="domain" description="SAM" evidence="4">
    <location>
        <begin position="911"/>
        <end position="975"/>
    </location>
</feature>
<feature type="short sequence motif" description="PDZ-binding" evidence="2">
    <location>
        <begin position="982"/>
        <end position="984"/>
    </location>
</feature>
<feature type="active site" description="Proton acceptor" evidence="3 7">
    <location>
        <position position="744"/>
    </location>
</feature>
<feature type="binding site" evidence="3">
    <location>
        <begin position="625"/>
        <end position="633"/>
    </location>
    <ligand>
        <name>ATP</name>
        <dbReference type="ChEBI" id="CHEBI:30616"/>
    </ligand>
</feature>
<feature type="binding site" evidence="3">
    <location>
        <position position="651"/>
    </location>
    <ligand>
        <name>ATP</name>
        <dbReference type="ChEBI" id="CHEBI:30616"/>
    </ligand>
</feature>
<feature type="glycosylation site" description="N-linked (GlcNAc...) asparagine" evidence="2">
    <location>
        <position position="315"/>
    </location>
</feature>
<feature type="glycosylation site" description="N-linked (GlcNAc...) asparagine" evidence="2">
    <location>
        <position position="407"/>
    </location>
</feature>
<feature type="glycosylation site" description="N-linked (GlcNAc...) asparagine" evidence="2">
    <location>
        <position position="480"/>
    </location>
</feature>
<feature type="non-terminal residue">
    <location>
        <position position="1"/>
    </location>
</feature>
<gene>
    <name type="primary">EPHB1</name>
    <name type="synonym">CEK6</name>
</gene>
<comment type="function">
    <text evidence="1">Receptor tyrosine kinase which binds promiscuously transmembrane ephrin-B family ligands residing on adjacent cells, leading to contact-dependent bidirectional signaling into neighboring cells. The signaling pathway downstream of the receptor is referred to as forward signaling while the signaling pathway downstream of the ephrin ligand is referred to as reverse signaling. May play a role in axon guidance during nervous system development. May also play an important redundant role with other ephrin-B receptors in development and maturation of dendritic spines and synapse formation. More generally, may play a role in targeted cell migration and adhesion. Upon activation by ephrin-B ligands activates the MAPK/ERK and the JNK signaling cascades to regulate cell migration and adhesion respectively (By similarity).</text>
</comment>
<comment type="catalytic activity">
    <reaction evidence="7">
        <text>L-tyrosyl-[protein] + ATP = O-phospho-L-tyrosyl-[protein] + ADP + H(+)</text>
        <dbReference type="Rhea" id="RHEA:10596"/>
        <dbReference type="Rhea" id="RHEA-COMP:10136"/>
        <dbReference type="Rhea" id="RHEA-COMP:20101"/>
        <dbReference type="ChEBI" id="CHEBI:15378"/>
        <dbReference type="ChEBI" id="CHEBI:30616"/>
        <dbReference type="ChEBI" id="CHEBI:46858"/>
        <dbReference type="ChEBI" id="CHEBI:61978"/>
        <dbReference type="ChEBI" id="CHEBI:456216"/>
        <dbReference type="EC" id="2.7.10.1"/>
    </reaction>
</comment>
<comment type="subunit">
    <text evidence="1">Heterotetramer upon binding of the ligand. The heterotetramer is composed of an ephrin dimer and a receptor dimer. Oligomerization is probably required to induce biological responses (By similarity).</text>
</comment>
<comment type="subcellular location">
    <subcellularLocation>
        <location evidence="1">Cell membrane</location>
        <topology>Single-pass type I membrane protein</topology>
    </subcellularLocation>
    <subcellularLocation>
        <location evidence="1">Early endosome membrane</location>
    </subcellularLocation>
    <subcellularLocation>
        <location evidence="1">Cell projection</location>
        <location evidence="1">Dendrite</location>
    </subcellularLocation>
</comment>
<comment type="tissue specificity">
    <text>Expressed at high levels in the 10-day embryo, and in adult brain, lung, heart and skeletal muscle. Low levels of expression detected in all other adult tissues tested.</text>
</comment>
<comment type="PTM">
    <text evidence="1">Phosphorylated. Autophosphorylation is stimulated by ligands (By similarity).</text>
</comment>
<comment type="similarity">
    <text evidence="3">Belongs to the protein kinase superfamily. Tyr protein kinase family. Ephrin receptor subfamily.</text>
</comment>
<name>EPHB1_CHICK</name>
<reference key="1">
    <citation type="journal article" date="1993" name="Oncogene">
        <title>Five novel avian Eph-related tyrosine kinases are differentially expressed.</title>
        <authorList>
            <person name="Sajjadi F.G."/>
            <person name="Pasquale E.B."/>
        </authorList>
    </citation>
    <scope>NUCLEOTIDE SEQUENCE [MRNA]</scope>
    <source>
        <tissue>Brain</tissue>
    </source>
</reference>